<reference key="1">
    <citation type="journal article" date="2011" name="Theor. Appl. Genet.">
        <title>Uncovering of major genetic factors generating naturally occurring variation in heading date among Asian rice cultivars.</title>
        <authorList>
            <person name="Ebana K."/>
            <person name="Shibaya T."/>
            <person name="Wu J."/>
            <person name="Matsubara K."/>
            <person name="Kanamori H."/>
            <person name="Yamane H."/>
            <person name="Yamanouchi U."/>
            <person name="Mizubayashi T."/>
            <person name="Kono I."/>
            <person name="Shomura A."/>
            <person name="Ito S."/>
            <person name="Ando T."/>
            <person name="Hori K."/>
            <person name="Matsumoto T."/>
            <person name="Yano M."/>
        </authorList>
    </citation>
    <scope>NUCLEOTIDE SEQUENCE [GENOMIC DNA]</scope>
    <source>
        <strain>cv. Khau Mac Kho</strain>
    </source>
</reference>
<organism>
    <name type="scientific">Oryza sativa subsp. japonica</name>
    <name type="common">Rice</name>
    <dbReference type="NCBI Taxonomy" id="39947"/>
    <lineage>
        <taxon>Eukaryota</taxon>
        <taxon>Viridiplantae</taxon>
        <taxon>Streptophyta</taxon>
        <taxon>Embryophyta</taxon>
        <taxon>Tracheophyta</taxon>
        <taxon>Spermatophyta</taxon>
        <taxon>Magnoliopsida</taxon>
        <taxon>Liliopsida</taxon>
        <taxon>Poales</taxon>
        <taxon>Poaceae</taxon>
        <taxon>BOP clade</taxon>
        <taxon>Oryzoideae</taxon>
        <taxon>Oryzeae</taxon>
        <taxon>Oryzinae</taxon>
        <taxon>Oryza</taxon>
        <taxon>Oryza sativa</taxon>
    </lineage>
</organism>
<proteinExistence type="inferred from homology"/>
<protein>
    <recommendedName>
        <fullName evidence="5">Casein kinase II subunit alpha-2</fullName>
        <shortName evidence="4">OsCKA2</shortName>
        <ecNumber evidence="5">2.7.11.1</ecNumber>
    </recommendedName>
    <alternativeName>
        <fullName evidence="5">Protein HEADING DATE 6</fullName>
    </alternativeName>
</protein>
<accession>B6F107</accession>
<gene>
    <name evidence="5" type="primary">HD6</name>
    <name evidence="4" type="synonym">CKA2</name>
</gene>
<sequence length="333" mass="39261">MSKARVYADVNVLRPKEYWDYEALTVQWGEQDDYEVVRKVGRGKYSEVFEGINVNNNEKCIIKILKPVKKKKIKREIKILQNLCGGPNIVKLLDIVRDQHSKTPSLIFEYVNNTDFKVLYPTLTDYDIRYYIYELLKALDYCHSQGIMHRDVKPHNVMIDHELRKLRLIDWGLAEFYHPGKEYNVRVASRYFKGPELLVDLQDYDYSLDMWSLGCMFAGMIFRKEPFFYGHDNHDQLVKIAKVLGTEALNAYLNKYHIELDPQLEALVGRHSRKPWSKFINADNQHLVSPEAVDFLDKLLRYDHQDRLTAREAMAHPYFLQVRAAENSRARPQ</sequence>
<evidence type="ECO:0000250" key="1">
    <source>
        <dbReference type="UniProtKB" id="P48730"/>
    </source>
</evidence>
<evidence type="ECO:0000250" key="2">
    <source>
        <dbReference type="UniProtKB" id="Q9AR27"/>
    </source>
</evidence>
<evidence type="ECO:0000255" key="3">
    <source>
        <dbReference type="PROSITE-ProRule" id="PRU00159"/>
    </source>
</evidence>
<evidence type="ECO:0000303" key="4">
    <source>
    </source>
</evidence>
<evidence type="ECO:0000305" key="5"/>
<dbReference type="EC" id="2.7.11.1" evidence="5"/>
<dbReference type="EMBL" id="AB435662">
    <property type="protein sequence ID" value="BAG82854.1"/>
    <property type="molecule type" value="Genomic_DNA"/>
</dbReference>
<dbReference type="SMR" id="B6F107"/>
<dbReference type="eggNOG" id="KOG0668">
    <property type="taxonomic scope" value="Eukaryota"/>
</dbReference>
<dbReference type="GO" id="GO:0005737">
    <property type="term" value="C:cytoplasm"/>
    <property type="evidence" value="ECO:0007669"/>
    <property type="project" value="UniProtKB-SubCell"/>
</dbReference>
<dbReference type="GO" id="GO:0005524">
    <property type="term" value="F:ATP binding"/>
    <property type="evidence" value="ECO:0007669"/>
    <property type="project" value="UniProtKB-KW"/>
</dbReference>
<dbReference type="GO" id="GO:0106310">
    <property type="term" value="F:protein serine kinase activity"/>
    <property type="evidence" value="ECO:0007669"/>
    <property type="project" value="RHEA"/>
</dbReference>
<dbReference type="GO" id="GO:0004674">
    <property type="term" value="F:protein serine/threonine kinase activity"/>
    <property type="evidence" value="ECO:0007669"/>
    <property type="project" value="UniProtKB-KW"/>
</dbReference>
<dbReference type="GO" id="GO:0009908">
    <property type="term" value="P:flower development"/>
    <property type="evidence" value="ECO:0007669"/>
    <property type="project" value="UniProtKB-KW"/>
</dbReference>
<dbReference type="CDD" id="cd14132">
    <property type="entry name" value="STKc_CK2_alpha"/>
    <property type="match status" value="1"/>
</dbReference>
<dbReference type="FunFam" id="1.10.510.10:FF:000059">
    <property type="entry name" value="Casein kinase II subunit alpha"/>
    <property type="match status" value="1"/>
</dbReference>
<dbReference type="FunFam" id="3.30.200.20:FF:000088">
    <property type="entry name" value="Casein kinase II subunit alpha"/>
    <property type="match status" value="1"/>
</dbReference>
<dbReference type="Gene3D" id="3.30.200.20">
    <property type="entry name" value="Phosphorylase Kinase, domain 1"/>
    <property type="match status" value="1"/>
</dbReference>
<dbReference type="Gene3D" id="1.10.510.10">
    <property type="entry name" value="Transferase(Phosphotransferase) domain 1"/>
    <property type="match status" value="1"/>
</dbReference>
<dbReference type="InterPro" id="IPR045216">
    <property type="entry name" value="CK2_alpha"/>
</dbReference>
<dbReference type="InterPro" id="IPR011009">
    <property type="entry name" value="Kinase-like_dom_sf"/>
</dbReference>
<dbReference type="InterPro" id="IPR000719">
    <property type="entry name" value="Prot_kinase_dom"/>
</dbReference>
<dbReference type="InterPro" id="IPR017441">
    <property type="entry name" value="Protein_kinase_ATP_BS"/>
</dbReference>
<dbReference type="InterPro" id="IPR008271">
    <property type="entry name" value="Ser/Thr_kinase_AS"/>
</dbReference>
<dbReference type="PANTHER" id="PTHR24054">
    <property type="entry name" value="CASEIN KINASE II SUBUNIT ALPHA"/>
    <property type="match status" value="1"/>
</dbReference>
<dbReference type="PANTHER" id="PTHR24054:SF56">
    <property type="entry name" value="CASEIN KINASE II SUBUNIT ALPHA-1"/>
    <property type="match status" value="1"/>
</dbReference>
<dbReference type="Pfam" id="PF00069">
    <property type="entry name" value="Pkinase"/>
    <property type="match status" value="1"/>
</dbReference>
<dbReference type="SMART" id="SM00220">
    <property type="entry name" value="S_TKc"/>
    <property type="match status" value="1"/>
</dbReference>
<dbReference type="SUPFAM" id="SSF56112">
    <property type="entry name" value="Protein kinase-like (PK-like)"/>
    <property type="match status" value="1"/>
</dbReference>
<dbReference type="PROSITE" id="PS00107">
    <property type="entry name" value="PROTEIN_KINASE_ATP"/>
    <property type="match status" value="1"/>
</dbReference>
<dbReference type="PROSITE" id="PS50011">
    <property type="entry name" value="PROTEIN_KINASE_DOM"/>
    <property type="match status" value="1"/>
</dbReference>
<dbReference type="PROSITE" id="PS00108">
    <property type="entry name" value="PROTEIN_KINASE_ST"/>
    <property type="match status" value="1"/>
</dbReference>
<keyword id="KW-0067">ATP-binding</keyword>
<keyword id="KW-0963">Cytoplasm</keyword>
<keyword id="KW-0287">Flowering</keyword>
<keyword id="KW-0418">Kinase</keyword>
<keyword id="KW-0547">Nucleotide-binding</keyword>
<keyword id="KW-0723">Serine/threonine-protein kinase</keyword>
<keyword id="KW-0808">Transferase</keyword>
<feature type="chain" id="PRO_0000437453" description="Casein kinase II subunit alpha-2">
    <location>
        <begin position="1"/>
        <end position="333"/>
    </location>
</feature>
<feature type="domain" description="Protein kinase" evidence="3">
    <location>
        <begin position="34"/>
        <end position="319"/>
    </location>
</feature>
<feature type="active site" description="Proton acceptor" evidence="3">
    <location>
        <position position="151"/>
    </location>
</feature>
<feature type="binding site" evidence="3">
    <location>
        <begin position="40"/>
        <end position="48"/>
    </location>
    <ligand>
        <name>ATP</name>
        <dbReference type="ChEBI" id="CHEBI:30616"/>
    </ligand>
</feature>
<feature type="binding site" evidence="3">
    <location>
        <position position="63"/>
    </location>
    <ligand>
        <name>ATP</name>
        <dbReference type="ChEBI" id="CHEBI:30616"/>
    </ligand>
</feature>
<comment type="function">
    <text evidence="1 2">Casein kinases are operationally defined by their preferential utilization of acidic proteins such as caseins as substrates. It can phosphorylate a large number of proteins (By similarity). Involved in photoperiod sensitivity (PS). Increases days-to-heading under natural day (ND) and long day (LD) conditions, but not under short day (SD) conditions (By similarity).</text>
</comment>
<comment type="catalytic activity">
    <reaction evidence="5">
        <text>L-seryl-[protein] + ATP = O-phospho-L-seryl-[protein] + ADP + H(+)</text>
        <dbReference type="Rhea" id="RHEA:17989"/>
        <dbReference type="Rhea" id="RHEA-COMP:9863"/>
        <dbReference type="Rhea" id="RHEA-COMP:11604"/>
        <dbReference type="ChEBI" id="CHEBI:15378"/>
        <dbReference type="ChEBI" id="CHEBI:29999"/>
        <dbReference type="ChEBI" id="CHEBI:30616"/>
        <dbReference type="ChEBI" id="CHEBI:83421"/>
        <dbReference type="ChEBI" id="CHEBI:456216"/>
        <dbReference type="EC" id="2.7.11.1"/>
    </reaction>
</comment>
<comment type="catalytic activity">
    <reaction evidence="5">
        <text>L-threonyl-[protein] + ATP = O-phospho-L-threonyl-[protein] + ADP + H(+)</text>
        <dbReference type="Rhea" id="RHEA:46608"/>
        <dbReference type="Rhea" id="RHEA-COMP:11060"/>
        <dbReference type="Rhea" id="RHEA-COMP:11605"/>
        <dbReference type="ChEBI" id="CHEBI:15378"/>
        <dbReference type="ChEBI" id="CHEBI:30013"/>
        <dbReference type="ChEBI" id="CHEBI:30616"/>
        <dbReference type="ChEBI" id="CHEBI:61977"/>
        <dbReference type="ChEBI" id="CHEBI:456216"/>
        <dbReference type="EC" id="2.7.11.1"/>
    </reaction>
</comment>
<comment type="subunit">
    <text evidence="1">Monomer.</text>
</comment>
<comment type="subcellular location">
    <subcellularLocation>
        <location evidence="1">Cytoplasm</location>
    </subcellularLocation>
</comment>
<comment type="PTM">
    <text evidence="1">Autophosphorylated.</text>
</comment>
<comment type="miscellaneous">
    <text evidence="5">The Nipponbare allele of HD6 (AC Q9AQU1) contains a premature stop codon, resulting in a truncated non-functional product.</text>
</comment>
<comment type="similarity">
    <text evidence="5">Belongs to the protein kinase superfamily. Ser/Thr protein kinase family. CK2 subfamily.</text>
</comment>
<name>HD6_ORYSJ</name>